<evidence type="ECO:0000255" key="1">
    <source>
        <dbReference type="HAMAP-Rule" id="MF_00605"/>
    </source>
</evidence>
<protein>
    <recommendedName>
        <fullName evidence="1">tRNA (guanine-N(1)-)-methyltransferase</fullName>
        <ecNumber evidence="1">2.1.1.228</ecNumber>
    </recommendedName>
    <alternativeName>
        <fullName evidence="1">M1G-methyltransferase</fullName>
    </alternativeName>
    <alternativeName>
        <fullName evidence="1">tRNA [GM37] methyltransferase</fullName>
    </alternativeName>
</protein>
<sequence>MANLRIEVISLFPEMFSAISEYGITSRAVKQGLLQLTCWNPRDYTTDRHHTVDDRPFGGGPGMVMKIKPLEDALAQAKAAAGEKAKVIYLSPQGRQLKQAGVRELANEEALILIAGRYEGIDERFIEAHVDEEWSIGDYVLSGGELPAMVLIDAVTRLLPGALGHADSAEEDSFTDGLLDCPHYTRPEVYADQRVPDVLLSGNHAHIRRWRLQQSLGRTYERRADLLESRSLSGEEKKLLEEYILARDDS</sequence>
<gene>
    <name evidence="1" type="primary">trmD</name>
    <name type="ordered locus">PFLU_5010</name>
</gene>
<organism>
    <name type="scientific">Pseudomonas fluorescens (strain SBW25)</name>
    <dbReference type="NCBI Taxonomy" id="216595"/>
    <lineage>
        <taxon>Bacteria</taxon>
        <taxon>Pseudomonadati</taxon>
        <taxon>Pseudomonadota</taxon>
        <taxon>Gammaproteobacteria</taxon>
        <taxon>Pseudomonadales</taxon>
        <taxon>Pseudomonadaceae</taxon>
        <taxon>Pseudomonas</taxon>
    </lineage>
</organism>
<dbReference type="EC" id="2.1.1.228" evidence="1"/>
<dbReference type="EMBL" id="AM181176">
    <property type="protein sequence ID" value="CAY51979.1"/>
    <property type="molecule type" value="Genomic_DNA"/>
</dbReference>
<dbReference type="SMR" id="C3K1G9"/>
<dbReference type="STRING" id="294.SRM1_01076"/>
<dbReference type="eggNOG" id="COG0336">
    <property type="taxonomic scope" value="Bacteria"/>
</dbReference>
<dbReference type="HOGENOM" id="CLU_047363_0_2_6"/>
<dbReference type="OrthoDB" id="9807416at2"/>
<dbReference type="GO" id="GO:0005829">
    <property type="term" value="C:cytosol"/>
    <property type="evidence" value="ECO:0007669"/>
    <property type="project" value="TreeGrafter"/>
</dbReference>
<dbReference type="GO" id="GO:0052906">
    <property type="term" value="F:tRNA (guanine(37)-N1)-methyltransferase activity"/>
    <property type="evidence" value="ECO:0007669"/>
    <property type="project" value="UniProtKB-UniRule"/>
</dbReference>
<dbReference type="GO" id="GO:0002939">
    <property type="term" value="P:tRNA N1-guanine methylation"/>
    <property type="evidence" value="ECO:0007669"/>
    <property type="project" value="TreeGrafter"/>
</dbReference>
<dbReference type="CDD" id="cd18080">
    <property type="entry name" value="TrmD-like"/>
    <property type="match status" value="1"/>
</dbReference>
<dbReference type="FunFam" id="1.10.1270.20:FF:000001">
    <property type="entry name" value="tRNA (guanine-N(1)-)-methyltransferase"/>
    <property type="match status" value="1"/>
</dbReference>
<dbReference type="FunFam" id="3.40.1280.10:FF:000001">
    <property type="entry name" value="tRNA (guanine-N(1)-)-methyltransferase"/>
    <property type="match status" value="1"/>
</dbReference>
<dbReference type="Gene3D" id="3.40.1280.10">
    <property type="match status" value="1"/>
</dbReference>
<dbReference type="Gene3D" id="1.10.1270.20">
    <property type="entry name" value="tRNA(m1g37)methyltransferase, domain 2"/>
    <property type="match status" value="1"/>
</dbReference>
<dbReference type="HAMAP" id="MF_00605">
    <property type="entry name" value="TrmD"/>
    <property type="match status" value="1"/>
</dbReference>
<dbReference type="InterPro" id="IPR029028">
    <property type="entry name" value="Alpha/beta_knot_MTases"/>
</dbReference>
<dbReference type="InterPro" id="IPR023148">
    <property type="entry name" value="tRNA_m1G_MeTrfase_C_sf"/>
</dbReference>
<dbReference type="InterPro" id="IPR002649">
    <property type="entry name" value="tRNA_m1G_MeTrfase_TrmD"/>
</dbReference>
<dbReference type="InterPro" id="IPR029026">
    <property type="entry name" value="tRNA_m1G_MTases_N"/>
</dbReference>
<dbReference type="InterPro" id="IPR016009">
    <property type="entry name" value="tRNA_MeTrfase_TRMD/TRM10"/>
</dbReference>
<dbReference type="NCBIfam" id="NF000648">
    <property type="entry name" value="PRK00026.1"/>
    <property type="match status" value="1"/>
</dbReference>
<dbReference type="NCBIfam" id="TIGR00088">
    <property type="entry name" value="trmD"/>
    <property type="match status" value="1"/>
</dbReference>
<dbReference type="PANTHER" id="PTHR46417">
    <property type="entry name" value="TRNA (GUANINE-N(1)-)-METHYLTRANSFERASE"/>
    <property type="match status" value="1"/>
</dbReference>
<dbReference type="PANTHER" id="PTHR46417:SF1">
    <property type="entry name" value="TRNA (GUANINE-N(1)-)-METHYLTRANSFERASE"/>
    <property type="match status" value="1"/>
</dbReference>
<dbReference type="Pfam" id="PF01746">
    <property type="entry name" value="tRNA_m1G_MT"/>
    <property type="match status" value="1"/>
</dbReference>
<dbReference type="PIRSF" id="PIRSF000386">
    <property type="entry name" value="tRNA_mtase"/>
    <property type="match status" value="1"/>
</dbReference>
<dbReference type="SUPFAM" id="SSF75217">
    <property type="entry name" value="alpha/beta knot"/>
    <property type="match status" value="1"/>
</dbReference>
<feature type="chain" id="PRO_1000212231" description="tRNA (guanine-N(1)-)-methyltransferase">
    <location>
        <begin position="1"/>
        <end position="250"/>
    </location>
</feature>
<feature type="binding site" evidence="1">
    <location>
        <position position="116"/>
    </location>
    <ligand>
        <name>S-adenosyl-L-methionine</name>
        <dbReference type="ChEBI" id="CHEBI:59789"/>
    </ligand>
</feature>
<feature type="binding site" evidence="1">
    <location>
        <begin position="136"/>
        <end position="141"/>
    </location>
    <ligand>
        <name>S-adenosyl-L-methionine</name>
        <dbReference type="ChEBI" id="CHEBI:59789"/>
    </ligand>
</feature>
<name>TRMD_PSEFS</name>
<accession>C3K1G9</accession>
<comment type="function">
    <text evidence="1">Specifically methylates guanosine-37 in various tRNAs.</text>
</comment>
<comment type="catalytic activity">
    <reaction evidence="1">
        <text>guanosine(37) in tRNA + S-adenosyl-L-methionine = N(1)-methylguanosine(37) in tRNA + S-adenosyl-L-homocysteine + H(+)</text>
        <dbReference type="Rhea" id="RHEA:36899"/>
        <dbReference type="Rhea" id="RHEA-COMP:10145"/>
        <dbReference type="Rhea" id="RHEA-COMP:10147"/>
        <dbReference type="ChEBI" id="CHEBI:15378"/>
        <dbReference type="ChEBI" id="CHEBI:57856"/>
        <dbReference type="ChEBI" id="CHEBI:59789"/>
        <dbReference type="ChEBI" id="CHEBI:73542"/>
        <dbReference type="ChEBI" id="CHEBI:74269"/>
        <dbReference type="EC" id="2.1.1.228"/>
    </reaction>
</comment>
<comment type="subunit">
    <text evidence="1">Homodimer.</text>
</comment>
<comment type="subcellular location">
    <subcellularLocation>
        <location evidence="1">Cytoplasm</location>
    </subcellularLocation>
</comment>
<comment type="similarity">
    <text evidence="1">Belongs to the RNA methyltransferase TrmD family.</text>
</comment>
<proteinExistence type="inferred from homology"/>
<keyword id="KW-0963">Cytoplasm</keyword>
<keyword id="KW-0489">Methyltransferase</keyword>
<keyword id="KW-0949">S-adenosyl-L-methionine</keyword>
<keyword id="KW-0808">Transferase</keyword>
<keyword id="KW-0819">tRNA processing</keyword>
<reference key="1">
    <citation type="journal article" date="2009" name="Genome Biol.">
        <title>Genomic and genetic analyses of diversity and plant interactions of Pseudomonas fluorescens.</title>
        <authorList>
            <person name="Silby M.W."/>
            <person name="Cerdeno-Tarraga A.M."/>
            <person name="Vernikos G.S."/>
            <person name="Giddens S.R."/>
            <person name="Jackson R.W."/>
            <person name="Preston G.M."/>
            <person name="Zhang X.-X."/>
            <person name="Moon C.D."/>
            <person name="Gehrig S.M."/>
            <person name="Godfrey S.A.C."/>
            <person name="Knight C.G."/>
            <person name="Malone J.G."/>
            <person name="Robinson Z."/>
            <person name="Spiers A.J."/>
            <person name="Harris S."/>
            <person name="Challis G.L."/>
            <person name="Yaxley A.M."/>
            <person name="Harris D."/>
            <person name="Seeger K."/>
            <person name="Murphy L."/>
            <person name="Rutter S."/>
            <person name="Squares R."/>
            <person name="Quail M.A."/>
            <person name="Saunders E."/>
            <person name="Mavromatis K."/>
            <person name="Brettin T.S."/>
            <person name="Bentley S.D."/>
            <person name="Hothersall J."/>
            <person name="Stephens E."/>
            <person name="Thomas C.M."/>
            <person name="Parkhill J."/>
            <person name="Levy S.B."/>
            <person name="Rainey P.B."/>
            <person name="Thomson N.R."/>
        </authorList>
    </citation>
    <scope>NUCLEOTIDE SEQUENCE [LARGE SCALE GENOMIC DNA]</scope>
    <source>
        <strain>SBW25</strain>
    </source>
</reference>